<comment type="function">
    <text evidence="2">S-layer small protein. May anchor the complex to the cell membrane.</text>
</comment>
<comment type="subunit">
    <text evidence="5">The mushroom-shaped unit cells of the Sulfolobales' S-layers may consist of three SlaB subunits and six SlaA subunits.</text>
</comment>
<comment type="subcellular location">
    <subcellularLocation>
        <location evidence="5">Secreted</location>
        <location evidence="5">Cell wall</location>
        <location evidence="5">S-layer</location>
    </subcellularLocation>
    <subcellularLocation>
        <location evidence="1">Cell membrane</location>
        <topology evidence="1">Single-pass membrane protein</topology>
    </subcellularLocation>
</comment>
<comment type="similarity">
    <text evidence="4">Belongs to the Sulfolobales SlaB family.</text>
</comment>
<reference key="1">
    <citation type="journal article" date="2008" name="Appl. Environ. Microbiol.">
        <title>The genome sequence of the metal-mobilizing, extremely thermoacidophilic archaeon Metallosphaera sedula provides insights into bioleaching-associated metabolism.</title>
        <authorList>
            <person name="Auernik K.S."/>
            <person name="Maezato Y."/>
            <person name="Blum P.H."/>
            <person name="Kelly R.M."/>
        </authorList>
    </citation>
    <scope>NUCLEOTIDE SEQUENCE [LARGE SCALE GENOMIC DNA]</scope>
    <source>
        <strain>ATCC 51363 / DSM 5348 / JCM 9185 / NBRC 15509 / TH2</strain>
    </source>
</reference>
<reference key="2">
    <citation type="journal article" date="2009" name="Mol. Microbiol.">
        <title>Acidianus, Sulfolobus and Metallosphaera surface layers: structure, composition and gene expression.</title>
        <authorList>
            <person name="Veith A."/>
            <person name="Klingl A."/>
            <person name="Zolghadr B."/>
            <person name="Lauber K."/>
            <person name="Mentele R."/>
            <person name="Lottspeich F."/>
            <person name="Rachel R."/>
            <person name="Albers S.V."/>
            <person name="Kletzin A."/>
        </authorList>
    </citation>
    <scope>FUNCTION</scope>
    <scope>SUBUNIT</scope>
    <scope>SUBCELLULAR LOCATION</scope>
</reference>
<keyword id="KW-1003">Cell membrane</keyword>
<keyword id="KW-0134">Cell wall</keyword>
<keyword id="KW-0175">Coiled coil</keyword>
<keyword id="KW-0472">Membrane</keyword>
<keyword id="KW-1185">Reference proteome</keyword>
<keyword id="KW-0701">S-layer</keyword>
<keyword id="KW-0964">Secreted</keyword>
<keyword id="KW-0732">Signal</keyword>
<keyword id="KW-0812">Transmembrane</keyword>
<keyword id="KW-1133">Transmembrane helix</keyword>
<proteinExistence type="evidence at protein level"/>
<feature type="signal peptide" evidence="1">
    <location>
        <begin position="1"/>
        <end position="20"/>
    </location>
</feature>
<feature type="chain" id="PRO_0000444054" description="S-layer protein B">
    <location>
        <begin position="21"/>
        <end position="416"/>
    </location>
</feature>
<feature type="transmembrane region" description="Helical" evidence="1">
    <location>
        <begin position="392"/>
        <end position="412"/>
    </location>
</feature>
<feature type="coiled-coil region" evidence="1">
    <location>
        <begin position="310"/>
        <end position="330"/>
    </location>
</feature>
<organism>
    <name type="scientific">Metallosphaera sedula (strain ATCC 51363 / DSM 5348 / JCM 9185 / NBRC 15509 / TH2)</name>
    <dbReference type="NCBI Taxonomy" id="399549"/>
    <lineage>
        <taxon>Archaea</taxon>
        <taxon>Thermoproteota</taxon>
        <taxon>Thermoprotei</taxon>
        <taxon>Sulfolobales</taxon>
        <taxon>Sulfolobaceae</taxon>
        <taxon>Metallosphaera</taxon>
    </lineage>
</organism>
<sequence length="416" mass="43427">MKYNLLPLILLSLLVAPLLAMGSAPAITVTTQPVYHPGQTVFISGVTSPNTLVGITIYNPQGKAVYSNTTTSGPNGDYSLKAFTFPLQESTTFPFGTYTVQVGTQTGFTNSTTFQFLPLTATVNVLVVNPQGVPIQGATVTADSVTATTNASGQAVLNLPTGTYTLKVVPPSPYSPASENITVTAPNTYSFKITVQIQELALQVVSATSPNVNLKDLTSGTSITMIGGTTLTLMSMVTFAGQPISTATVTAMYNGTMYNATYMNGYYVITISVPNTQYETDLVIQATYSGMQSNTVTLPLTVNVNEQAIIASLNSTIQSLESQISSLSSTVSTLSSSVTSLSNTVSSLSSTVSKLNGTVASLQSSVSTLSSEYSTLNSRVNALSGLSGTVDIALAVSIIAIIISIVVLILVFRKIS</sequence>
<dbReference type="EMBL" id="CP000682">
    <property type="protein sequence ID" value="ABP95961.1"/>
    <property type="molecule type" value="Genomic_DNA"/>
</dbReference>
<dbReference type="RefSeq" id="WP_012021748.1">
    <property type="nucleotide sequence ID" value="NZ_CP139956.1"/>
</dbReference>
<dbReference type="SMR" id="A4YHQ9"/>
<dbReference type="STRING" id="399549.Msed_1807"/>
<dbReference type="GeneID" id="91756328"/>
<dbReference type="KEGG" id="mse:Msed_1807"/>
<dbReference type="eggNOG" id="arCOG02981">
    <property type="taxonomic scope" value="Archaea"/>
</dbReference>
<dbReference type="HOGENOM" id="CLU_670155_0_0_2"/>
<dbReference type="Proteomes" id="UP000000242">
    <property type="component" value="Chromosome"/>
</dbReference>
<dbReference type="GO" id="GO:0005576">
    <property type="term" value="C:extracellular region"/>
    <property type="evidence" value="ECO:0007669"/>
    <property type="project" value="UniProtKB-KW"/>
</dbReference>
<dbReference type="GO" id="GO:0005886">
    <property type="term" value="C:plasma membrane"/>
    <property type="evidence" value="ECO:0007669"/>
    <property type="project" value="UniProtKB-SubCell"/>
</dbReference>
<dbReference type="GO" id="GO:0030115">
    <property type="term" value="C:S-layer"/>
    <property type="evidence" value="ECO:0007669"/>
    <property type="project" value="UniProtKB-SubCell"/>
</dbReference>
<dbReference type="GO" id="GO:0030246">
    <property type="term" value="F:carbohydrate binding"/>
    <property type="evidence" value="ECO:0007669"/>
    <property type="project" value="InterPro"/>
</dbReference>
<dbReference type="Gene3D" id="1.20.5.340">
    <property type="match status" value="1"/>
</dbReference>
<dbReference type="Gene3D" id="2.60.40.1930">
    <property type="match status" value="1"/>
</dbReference>
<dbReference type="Gene3D" id="2.60.40.1120">
    <property type="entry name" value="Carboxypeptidase-like, regulatory domain"/>
    <property type="match status" value="1"/>
</dbReference>
<dbReference type="InterPro" id="IPR013784">
    <property type="entry name" value="Carb-bd-like_fold"/>
</dbReference>
<dbReference type="InterPro" id="IPR053696">
    <property type="entry name" value="SlaB_anchor"/>
</dbReference>
<dbReference type="NCBIfam" id="NF040788">
    <property type="entry name" value="S-lay_SlaB_Mtsph"/>
    <property type="match status" value="1"/>
</dbReference>
<dbReference type="Pfam" id="PF13620">
    <property type="entry name" value="CarboxypepD_reg"/>
    <property type="match status" value="1"/>
</dbReference>
<dbReference type="SUPFAM" id="SSF58100">
    <property type="entry name" value="Bacterial hemolysins"/>
    <property type="match status" value="1"/>
</dbReference>
<dbReference type="SUPFAM" id="SSF49452">
    <property type="entry name" value="Starch-binding domain-like"/>
    <property type="match status" value="1"/>
</dbReference>
<name>SLAB_METS5</name>
<evidence type="ECO:0000255" key="1"/>
<evidence type="ECO:0000269" key="2">
    <source>
    </source>
</evidence>
<evidence type="ECO:0000303" key="3">
    <source>
    </source>
</evidence>
<evidence type="ECO:0000305" key="4"/>
<evidence type="ECO:0000305" key="5">
    <source>
    </source>
</evidence>
<evidence type="ECO:0000312" key="6">
    <source>
        <dbReference type="EMBL" id="ABP95961.1"/>
    </source>
</evidence>
<accession>A4YHQ9</accession>
<gene>
    <name evidence="3" type="primary">slaB</name>
    <name evidence="6" type="ordered locus">Msed_1807</name>
</gene>
<protein>
    <recommendedName>
        <fullName evidence="3">S-layer protein B</fullName>
    </recommendedName>
    <alternativeName>
        <fullName evidence="4">Surface layer small protein</fullName>
    </alternativeName>
</protein>